<dbReference type="EC" id="6.1.1.21"/>
<dbReference type="EMBL" id="AE000512">
    <property type="protein sequence ID" value="AAD36166.1"/>
    <property type="molecule type" value="Genomic_DNA"/>
</dbReference>
<dbReference type="PIR" id="A72298">
    <property type="entry name" value="A72298"/>
</dbReference>
<dbReference type="RefSeq" id="NP_228896.1">
    <property type="nucleotide sequence ID" value="NC_000853.1"/>
</dbReference>
<dbReference type="RefSeq" id="WP_004080372.1">
    <property type="nucleotide sequence ID" value="NC_000853.1"/>
</dbReference>
<dbReference type="SMR" id="Q9X0H5"/>
<dbReference type="FunCoup" id="Q9X0H5">
    <property type="interactions" value="364"/>
</dbReference>
<dbReference type="STRING" id="243274.TM_1090"/>
<dbReference type="PaxDb" id="243274-THEMA_08900"/>
<dbReference type="DNASU" id="898676"/>
<dbReference type="EnsemblBacteria" id="AAD36166">
    <property type="protein sequence ID" value="AAD36166"/>
    <property type="gene ID" value="TM_1090"/>
</dbReference>
<dbReference type="KEGG" id="tma:TM1090"/>
<dbReference type="KEGG" id="tmi:THEMA_08900"/>
<dbReference type="KEGG" id="tmm:Tmari_1095"/>
<dbReference type="KEGG" id="tmw:THMA_1113"/>
<dbReference type="eggNOG" id="COG0124">
    <property type="taxonomic scope" value="Bacteria"/>
</dbReference>
<dbReference type="InParanoid" id="Q9X0H5"/>
<dbReference type="OrthoDB" id="9800814at2"/>
<dbReference type="Proteomes" id="UP000008183">
    <property type="component" value="Chromosome"/>
</dbReference>
<dbReference type="GO" id="GO:0005737">
    <property type="term" value="C:cytoplasm"/>
    <property type="evidence" value="ECO:0007669"/>
    <property type="project" value="UniProtKB-SubCell"/>
</dbReference>
<dbReference type="GO" id="GO:0005524">
    <property type="term" value="F:ATP binding"/>
    <property type="evidence" value="ECO:0007669"/>
    <property type="project" value="UniProtKB-UniRule"/>
</dbReference>
<dbReference type="GO" id="GO:0004821">
    <property type="term" value="F:histidine-tRNA ligase activity"/>
    <property type="evidence" value="ECO:0000318"/>
    <property type="project" value="GO_Central"/>
</dbReference>
<dbReference type="GO" id="GO:0006427">
    <property type="term" value="P:histidyl-tRNA aminoacylation"/>
    <property type="evidence" value="ECO:0000318"/>
    <property type="project" value="GO_Central"/>
</dbReference>
<dbReference type="CDD" id="cd00773">
    <property type="entry name" value="HisRS-like_core"/>
    <property type="match status" value="1"/>
</dbReference>
<dbReference type="CDD" id="cd00859">
    <property type="entry name" value="HisRS_anticodon"/>
    <property type="match status" value="1"/>
</dbReference>
<dbReference type="FunFam" id="3.30.930.10:FF:000005">
    <property type="entry name" value="Histidine--tRNA ligase"/>
    <property type="match status" value="1"/>
</dbReference>
<dbReference type="FunFam" id="3.40.50.800:FF:000067">
    <property type="entry name" value="Histidine--tRNA ligase"/>
    <property type="match status" value="1"/>
</dbReference>
<dbReference type="Gene3D" id="3.40.50.800">
    <property type="entry name" value="Anticodon-binding domain"/>
    <property type="match status" value="1"/>
</dbReference>
<dbReference type="Gene3D" id="3.30.930.10">
    <property type="entry name" value="Bira Bifunctional Protein, Domain 2"/>
    <property type="match status" value="1"/>
</dbReference>
<dbReference type="HAMAP" id="MF_00127">
    <property type="entry name" value="His_tRNA_synth"/>
    <property type="match status" value="1"/>
</dbReference>
<dbReference type="InterPro" id="IPR006195">
    <property type="entry name" value="aa-tRNA-synth_II"/>
</dbReference>
<dbReference type="InterPro" id="IPR045864">
    <property type="entry name" value="aa-tRNA-synth_II/BPL/LPL"/>
</dbReference>
<dbReference type="InterPro" id="IPR004154">
    <property type="entry name" value="Anticodon-bd"/>
</dbReference>
<dbReference type="InterPro" id="IPR036621">
    <property type="entry name" value="Anticodon-bd_dom_sf"/>
</dbReference>
<dbReference type="InterPro" id="IPR015807">
    <property type="entry name" value="His-tRNA-ligase"/>
</dbReference>
<dbReference type="InterPro" id="IPR041715">
    <property type="entry name" value="HisRS-like_core"/>
</dbReference>
<dbReference type="InterPro" id="IPR004516">
    <property type="entry name" value="HisRS/HisZ"/>
</dbReference>
<dbReference type="InterPro" id="IPR033656">
    <property type="entry name" value="HisRS_anticodon"/>
</dbReference>
<dbReference type="NCBIfam" id="TIGR00442">
    <property type="entry name" value="hisS"/>
    <property type="match status" value="1"/>
</dbReference>
<dbReference type="PANTHER" id="PTHR43707:SF1">
    <property type="entry name" value="HISTIDINE--TRNA LIGASE, MITOCHONDRIAL-RELATED"/>
    <property type="match status" value="1"/>
</dbReference>
<dbReference type="PANTHER" id="PTHR43707">
    <property type="entry name" value="HISTIDYL-TRNA SYNTHETASE"/>
    <property type="match status" value="1"/>
</dbReference>
<dbReference type="Pfam" id="PF03129">
    <property type="entry name" value="HGTP_anticodon"/>
    <property type="match status" value="1"/>
</dbReference>
<dbReference type="Pfam" id="PF13393">
    <property type="entry name" value="tRNA-synt_His"/>
    <property type="match status" value="1"/>
</dbReference>
<dbReference type="PIRSF" id="PIRSF001549">
    <property type="entry name" value="His-tRNA_synth"/>
    <property type="match status" value="1"/>
</dbReference>
<dbReference type="SUPFAM" id="SSF52954">
    <property type="entry name" value="Class II aaRS ABD-related"/>
    <property type="match status" value="1"/>
</dbReference>
<dbReference type="SUPFAM" id="SSF55681">
    <property type="entry name" value="Class II aaRS and biotin synthetases"/>
    <property type="match status" value="1"/>
</dbReference>
<dbReference type="PROSITE" id="PS50862">
    <property type="entry name" value="AA_TRNA_LIGASE_II"/>
    <property type="match status" value="1"/>
</dbReference>
<accession>Q9X0H5</accession>
<protein>
    <recommendedName>
        <fullName>Histidine--tRNA ligase</fullName>
        <ecNumber>6.1.1.21</ecNumber>
    </recommendedName>
    <alternativeName>
        <fullName>Histidyl-tRNA synthetase</fullName>
        <shortName>HisRS</shortName>
    </alternativeName>
</protein>
<sequence length="420" mass="48275">MKYRRIKGTNDIFGEEIWYWRYVEETFRNVCESAGIEEIRTPIFEQTELFVRSVGEESDIVQKEMYTFQDKAGRSITLRPEGTAPVVRAFLENSLIDRGFQQRYYYIGPMFRYEKPQSGRLRQFHQVGFEIIGPESPKADFEVIMLVDTFLRRLGLTKYKIHLNSIGCPVCRKNYREALKEYYGRILDNLCDDCKRRYETNILRLLDCKVDHEYSLNAPKSVDYLCDSCRAHYKKLKEYLNTFEIEYVEDHTLVRGLDYYTRTVFEVRHEGLGAQSAIAGGGRYDGLFAELGGSSVPALGFAGGIERIILALKAEGIEIPMKNVHLVYIATLGEKAFMDGVRLAGELRKKGLSVDVDIMDRKLSGQLKHASRMGSRYAVIIGDEELEKGIVILRDLETGDQVEIDRDFAADYIAERVSKD</sequence>
<evidence type="ECO:0000250" key="1"/>
<evidence type="ECO:0000305" key="2"/>
<comment type="catalytic activity">
    <reaction>
        <text>tRNA(His) + L-histidine + ATP = L-histidyl-tRNA(His) + AMP + diphosphate + H(+)</text>
        <dbReference type="Rhea" id="RHEA:17313"/>
        <dbReference type="Rhea" id="RHEA-COMP:9665"/>
        <dbReference type="Rhea" id="RHEA-COMP:9689"/>
        <dbReference type="ChEBI" id="CHEBI:15378"/>
        <dbReference type="ChEBI" id="CHEBI:30616"/>
        <dbReference type="ChEBI" id="CHEBI:33019"/>
        <dbReference type="ChEBI" id="CHEBI:57595"/>
        <dbReference type="ChEBI" id="CHEBI:78442"/>
        <dbReference type="ChEBI" id="CHEBI:78527"/>
        <dbReference type="ChEBI" id="CHEBI:456215"/>
        <dbReference type="EC" id="6.1.1.21"/>
    </reaction>
</comment>
<comment type="subunit">
    <text evidence="1">Homodimer.</text>
</comment>
<comment type="subcellular location">
    <subcellularLocation>
        <location evidence="1">Cytoplasm</location>
    </subcellularLocation>
</comment>
<comment type="similarity">
    <text evidence="2">Belongs to the class-II aminoacyl-tRNA synthetase family.</text>
</comment>
<gene>
    <name type="primary">hisS</name>
    <name type="ordered locus">TM_1090</name>
</gene>
<feature type="chain" id="PRO_0000136282" description="Histidine--tRNA ligase">
    <location>
        <begin position="1"/>
        <end position="420"/>
    </location>
</feature>
<name>SYH_THEMA</name>
<keyword id="KW-0030">Aminoacyl-tRNA synthetase</keyword>
<keyword id="KW-0067">ATP-binding</keyword>
<keyword id="KW-0963">Cytoplasm</keyword>
<keyword id="KW-0436">Ligase</keyword>
<keyword id="KW-0547">Nucleotide-binding</keyword>
<keyword id="KW-0648">Protein biosynthesis</keyword>
<keyword id="KW-1185">Reference proteome</keyword>
<reference key="1">
    <citation type="journal article" date="1999" name="Nature">
        <title>Evidence for lateral gene transfer between Archaea and Bacteria from genome sequence of Thermotoga maritima.</title>
        <authorList>
            <person name="Nelson K.E."/>
            <person name="Clayton R.A."/>
            <person name="Gill S.R."/>
            <person name="Gwinn M.L."/>
            <person name="Dodson R.J."/>
            <person name="Haft D.H."/>
            <person name="Hickey E.K."/>
            <person name="Peterson J.D."/>
            <person name="Nelson W.C."/>
            <person name="Ketchum K.A."/>
            <person name="McDonald L.A."/>
            <person name="Utterback T.R."/>
            <person name="Malek J.A."/>
            <person name="Linher K.D."/>
            <person name="Garrett M.M."/>
            <person name="Stewart A.M."/>
            <person name="Cotton M.D."/>
            <person name="Pratt M.S."/>
            <person name="Phillips C.A."/>
            <person name="Richardson D.L."/>
            <person name="Heidelberg J.F."/>
            <person name="Sutton G.G."/>
            <person name="Fleischmann R.D."/>
            <person name="Eisen J.A."/>
            <person name="White O."/>
            <person name="Salzberg S.L."/>
            <person name="Smith H.O."/>
            <person name="Venter J.C."/>
            <person name="Fraser C.M."/>
        </authorList>
    </citation>
    <scope>NUCLEOTIDE SEQUENCE [LARGE SCALE GENOMIC DNA]</scope>
    <source>
        <strain>ATCC 43589 / DSM 3109 / JCM 10099 / NBRC 100826 / MSB8</strain>
    </source>
</reference>
<organism>
    <name type="scientific">Thermotoga maritima (strain ATCC 43589 / DSM 3109 / JCM 10099 / NBRC 100826 / MSB8)</name>
    <dbReference type="NCBI Taxonomy" id="243274"/>
    <lineage>
        <taxon>Bacteria</taxon>
        <taxon>Thermotogati</taxon>
        <taxon>Thermotogota</taxon>
        <taxon>Thermotogae</taxon>
        <taxon>Thermotogales</taxon>
        <taxon>Thermotogaceae</taxon>
        <taxon>Thermotoga</taxon>
    </lineage>
</organism>
<proteinExistence type="inferred from homology"/>